<keyword id="KW-0067">ATP-binding</keyword>
<keyword id="KW-0963">Cytoplasm</keyword>
<keyword id="KW-0324">Glycolysis</keyword>
<keyword id="KW-0418">Kinase</keyword>
<keyword id="KW-0547">Nucleotide-binding</keyword>
<keyword id="KW-1185">Reference proteome</keyword>
<keyword id="KW-0808">Transferase</keyword>
<dbReference type="EC" id="2.7.2.3" evidence="1"/>
<dbReference type="EMBL" id="CP001287">
    <property type="protein sequence ID" value="ACK68277.1"/>
    <property type="molecule type" value="Genomic_DNA"/>
</dbReference>
<dbReference type="RefSeq" id="WP_015785332.1">
    <property type="nucleotide sequence ID" value="NC_011726.1"/>
</dbReference>
<dbReference type="SMR" id="B7JVE4"/>
<dbReference type="STRING" id="41431.PCC8801_4355"/>
<dbReference type="KEGG" id="cyp:PCC8801_4355"/>
<dbReference type="eggNOG" id="COG0126">
    <property type="taxonomic scope" value="Bacteria"/>
</dbReference>
<dbReference type="HOGENOM" id="CLU_025427_0_2_3"/>
<dbReference type="OrthoDB" id="9808460at2"/>
<dbReference type="UniPathway" id="UPA00109">
    <property type="reaction ID" value="UER00185"/>
</dbReference>
<dbReference type="Proteomes" id="UP000008204">
    <property type="component" value="Chromosome"/>
</dbReference>
<dbReference type="GO" id="GO:0005829">
    <property type="term" value="C:cytosol"/>
    <property type="evidence" value="ECO:0007669"/>
    <property type="project" value="TreeGrafter"/>
</dbReference>
<dbReference type="GO" id="GO:0043531">
    <property type="term" value="F:ADP binding"/>
    <property type="evidence" value="ECO:0007669"/>
    <property type="project" value="TreeGrafter"/>
</dbReference>
<dbReference type="GO" id="GO:0005524">
    <property type="term" value="F:ATP binding"/>
    <property type="evidence" value="ECO:0007669"/>
    <property type="project" value="UniProtKB-KW"/>
</dbReference>
<dbReference type="GO" id="GO:0004618">
    <property type="term" value="F:phosphoglycerate kinase activity"/>
    <property type="evidence" value="ECO:0007669"/>
    <property type="project" value="UniProtKB-UniRule"/>
</dbReference>
<dbReference type="GO" id="GO:0006094">
    <property type="term" value="P:gluconeogenesis"/>
    <property type="evidence" value="ECO:0007669"/>
    <property type="project" value="TreeGrafter"/>
</dbReference>
<dbReference type="GO" id="GO:0006096">
    <property type="term" value="P:glycolytic process"/>
    <property type="evidence" value="ECO:0007669"/>
    <property type="project" value="UniProtKB-UniRule"/>
</dbReference>
<dbReference type="CDD" id="cd00318">
    <property type="entry name" value="Phosphoglycerate_kinase"/>
    <property type="match status" value="1"/>
</dbReference>
<dbReference type="FunFam" id="3.40.50.1260:FF:000003">
    <property type="entry name" value="Phosphoglycerate kinase"/>
    <property type="match status" value="1"/>
</dbReference>
<dbReference type="FunFam" id="3.40.50.1260:FF:000006">
    <property type="entry name" value="Phosphoglycerate kinase"/>
    <property type="match status" value="1"/>
</dbReference>
<dbReference type="Gene3D" id="3.40.50.1260">
    <property type="entry name" value="Phosphoglycerate kinase, N-terminal domain"/>
    <property type="match status" value="2"/>
</dbReference>
<dbReference type="HAMAP" id="MF_00145">
    <property type="entry name" value="Phosphoglyc_kinase"/>
    <property type="match status" value="1"/>
</dbReference>
<dbReference type="InterPro" id="IPR001576">
    <property type="entry name" value="Phosphoglycerate_kinase"/>
</dbReference>
<dbReference type="InterPro" id="IPR015911">
    <property type="entry name" value="Phosphoglycerate_kinase_CS"/>
</dbReference>
<dbReference type="InterPro" id="IPR015824">
    <property type="entry name" value="Phosphoglycerate_kinase_N"/>
</dbReference>
<dbReference type="InterPro" id="IPR036043">
    <property type="entry name" value="Phosphoglycerate_kinase_sf"/>
</dbReference>
<dbReference type="PANTHER" id="PTHR11406">
    <property type="entry name" value="PHOSPHOGLYCERATE KINASE"/>
    <property type="match status" value="1"/>
</dbReference>
<dbReference type="PANTHER" id="PTHR11406:SF23">
    <property type="entry name" value="PHOSPHOGLYCERATE KINASE 1, CHLOROPLASTIC-RELATED"/>
    <property type="match status" value="1"/>
</dbReference>
<dbReference type="Pfam" id="PF00162">
    <property type="entry name" value="PGK"/>
    <property type="match status" value="1"/>
</dbReference>
<dbReference type="PIRSF" id="PIRSF000724">
    <property type="entry name" value="Pgk"/>
    <property type="match status" value="1"/>
</dbReference>
<dbReference type="PRINTS" id="PR00477">
    <property type="entry name" value="PHGLYCKINASE"/>
</dbReference>
<dbReference type="SUPFAM" id="SSF53748">
    <property type="entry name" value="Phosphoglycerate kinase"/>
    <property type="match status" value="1"/>
</dbReference>
<dbReference type="PROSITE" id="PS00111">
    <property type="entry name" value="PGLYCERATE_KINASE"/>
    <property type="match status" value="1"/>
</dbReference>
<name>PGK_RIPO1</name>
<reference key="1">
    <citation type="journal article" date="2011" name="MBio">
        <title>Novel metabolic attributes of the genus Cyanothece, comprising a group of unicellular nitrogen-fixing Cyanobacteria.</title>
        <authorList>
            <person name="Bandyopadhyay A."/>
            <person name="Elvitigala T."/>
            <person name="Welsh E."/>
            <person name="Stockel J."/>
            <person name="Liberton M."/>
            <person name="Min H."/>
            <person name="Sherman L.A."/>
            <person name="Pakrasi H.B."/>
        </authorList>
    </citation>
    <scope>NUCLEOTIDE SEQUENCE [LARGE SCALE GENOMIC DNA]</scope>
    <source>
        <strain>PCC 8801 / RF-1</strain>
    </source>
</reference>
<comment type="catalytic activity">
    <reaction evidence="1">
        <text>(2R)-3-phosphoglycerate + ATP = (2R)-3-phospho-glyceroyl phosphate + ADP</text>
        <dbReference type="Rhea" id="RHEA:14801"/>
        <dbReference type="ChEBI" id="CHEBI:30616"/>
        <dbReference type="ChEBI" id="CHEBI:57604"/>
        <dbReference type="ChEBI" id="CHEBI:58272"/>
        <dbReference type="ChEBI" id="CHEBI:456216"/>
        <dbReference type="EC" id="2.7.2.3"/>
    </reaction>
</comment>
<comment type="pathway">
    <text evidence="1">Carbohydrate degradation; glycolysis; pyruvate from D-glyceraldehyde 3-phosphate: step 2/5.</text>
</comment>
<comment type="subunit">
    <text evidence="1">Monomer.</text>
</comment>
<comment type="subcellular location">
    <subcellularLocation>
        <location evidence="1">Cytoplasm</location>
    </subcellularLocation>
</comment>
<comment type="similarity">
    <text evidence="1">Belongs to the phosphoglycerate kinase family.</text>
</comment>
<evidence type="ECO:0000255" key="1">
    <source>
        <dbReference type="HAMAP-Rule" id="MF_00145"/>
    </source>
</evidence>
<organism>
    <name type="scientific">Rippkaea orientalis (strain PCC 8801 / RF-1)</name>
    <name type="common">Cyanothece sp. (strain PCC 8801)</name>
    <dbReference type="NCBI Taxonomy" id="41431"/>
    <lineage>
        <taxon>Bacteria</taxon>
        <taxon>Bacillati</taxon>
        <taxon>Cyanobacteriota</taxon>
        <taxon>Cyanophyceae</taxon>
        <taxon>Oscillatoriophycideae</taxon>
        <taxon>Chroococcales</taxon>
        <taxon>Aphanothecaceae</taxon>
        <taxon>Rippkaea</taxon>
        <taxon>Rippkaea orientalis</taxon>
    </lineage>
</organism>
<gene>
    <name evidence="1" type="primary">pgk</name>
    <name type="ordered locus">PCC8801_4355</name>
</gene>
<sequence>MTKKSIVNLSPADVAGKRVLVRVDFNVPLDGATITDDTRIRAALPTIKDLIEKGAKVILCSHFGRPKGQVVESMRLTPVATRLSELLGQPVVMCDDCIGDSVTAAINQLQNGQVALLENLRFHAEEEANDPEFAQKLAANADLYVNDAFGTAHRAHASTEGVTHYLSPNVAGYLIEKELNYLQAAIENPQRPLVAIIGGSKVSSKIGVIETLLEKCDKLIIGGGMIFTFYKARGLNVGKSLVEDDKLELAKSLEAKAKEKGVDFLLPTDVVLADNFAPDANAKTVSIDAIEDGWMGLDIGPESVKVFQAALADCKSVIWNGPMGVFEFDKFAKGTEAIAHTLAELTGKGTITIIGGGDSVAAVEKVGVADKMSHISTGGGASLELLEGKVLPGIAALDEV</sequence>
<proteinExistence type="inferred from homology"/>
<feature type="chain" id="PRO_1000192823" description="Phosphoglycerate kinase">
    <location>
        <begin position="1"/>
        <end position="400"/>
    </location>
</feature>
<feature type="binding site" evidence="1">
    <location>
        <begin position="24"/>
        <end position="26"/>
    </location>
    <ligand>
        <name>substrate</name>
    </ligand>
</feature>
<feature type="binding site" evidence="1">
    <location>
        <position position="39"/>
    </location>
    <ligand>
        <name>substrate</name>
    </ligand>
</feature>
<feature type="binding site" evidence="1">
    <location>
        <begin position="62"/>
        <end position="65"/>
    </location>
    <ligand>
        <name>substrate</name>
    </ligand>
</feature>
<feature type="binding site" evidence="1">
    <location>
        <position position="121"/>
    </location>
    <ligand>
        <name>substrate</name>
    </ligand>
</feature>
<feature type="binding site" evidence="1">
    <location>
        <position position="154"/>
    </location>
    <ligand>
        <name>substrate</name>
    </ligand>
</feature>
<feature type="binding site" evidence="1">
    <location>
        <position position="205"/>
    </location>
    <ligand>
        <name>ATP</name>
        <dbReference type="ChEBI" id="CHEBI:30616"/>
    </ligand>
</feature>
<feature type="binding site" evidence="1">
    <location>
        <position position="296"/>
    </location>
    <ligand>
        <name>ATP</name>
        <dbReference type="ChEBI" id="CHEBI:30616"/>
    </ligand>
</feature>
<feature type="binding site" evidence="1">
    <location>
        <position position="327"/>
    </location>
    <ligand>
        <name>ATP</name>
        <dbReference type="ChEBI" id="CHEBI:30616"/>
    </ligand>
</feature>
<feature type="binding site" evidence="1">
    <location>
        <begin position="356"/>
        <end position="359"/>
    </location>
    <ligand>
        <name>ATP</name>
        <dbReference type="ChEBI" id="CHEBI:30616"/>
    </ligand>
</feature>
<protein>
    <recommendedName>
        <fullName evidence="1">Phosphoglycerate kinase</fullName>
        <ecNumber evidence="1">2.7.2.3</ecNumber>
    </recommendedName>
</protein>
<accession>B7JVE4</accession>